<feature type="chain" id="PRO_0000145443" description="DNA topoisomerase 4 subunit B">
    <location>
        <begin position="1"/>
        <end position="647"/>
    </location>
</feature>
<feature type="domain" description="Toprim" evidence="1">
    <location>
        <begin position="427"/>
        <end position="541"/>
    </location>
</feature>
<feature type="region of interest" description="Disordered" evidence="2">
    <location>
        <begin position="391"/>
        <end position="421"/>
    </location>
</feature>
<feature type="compositionally biased region" description="Basic and acidic residues" evidence="2">
    <location>
        <begin position="391"/>
        <end position="401"/>
    </location>
</feature>
<feature type="binding site" evidence="1">
    <location>
        <position position="11"/>
    </location>
    <ligand>
        <name>ATP</name>
        <dbReference type="ChEBI" id="CHEBI:30616"/>
    </ligand>
</feature>
<feature type="binding site" evidence="1">
    <location>
        <position position="51"/>
    </location>
    <ligand>
        <name>ATP</name>
        <dbReference type="ChEBI" id="CHEBI:30616"/>
    </ligand>
</feature>
<feature type="binding site" evidence="1">
    <location>
        <position position="78"/>
    </location>
    <ligand>
        <name>ATP</name>
        <dbReference type="ChEBI" id="CHEBI:30616"/>
    </ligand>
</feature>
<feature type="binding site" evidence="1">
    <location>
        <begin position="118"/>
        <end position="124"/>
    </location>
    <ligand>
        <name>ATP</name>
        <dbReference type="ChEBI" id="CHEBI:30616"/>
    </ligand>
</feature>
<feature type="binding site" evidence="1">
    <location>
        <position position="344"/>
    </location>
    <ligand>
        <name>ATP</name>
        <dbReference type="ChEBI" id="CHEBI:30616"/>
    </ligand>
</feature>
<feature type="binding site" evidence="1 5">
    <location>
        <position position="433"/>
    </location>
    <ligand>
        <name>Mg(2+)</name>
        <dbReference type="ChEBI" id="CHEBI:18420"/>
        <label>1</label>
        <note>catalytic</note>
    </ligand>
</feature>
<feature type="binding site" evidence="1 5">
    <location>
        <position position="506"/>
    </location>
    <ligand>
        <name>Mg(2+)</name>
        <dbReference type="ChEBI" id="CHEBI:18420"/>
        <label>1</label>
        <note>catalytic</note>
    </ligand>
</feature>
<feature type="binding site" evidence="1 5">
    <location>
        <position position="506"/>
    </location>
    <ligand>
        <name>Mg(2+)</name>
        <dbReference type="ChEBI" id="CHEBI:18420"/>
        <label>2</label>
    </ligand>
</feature>
<feature type="binding site" evidence="1 5">
    <location>
        <position position="508"/>
    </location>
    <ligand>
        <name>Mg(2+)</name>
        <dbReference type="ChEBI" id="CHEBI:18420"/>
        <label>2</label>
    </ligand>
</feature>
<feature type="site" description="Interaction with DNA" evidence="1">
    <location>
        <position position="458"/>
    </location>
</feature>
<feature type="site" description="Interaction with DNA" evidence="1">
    <location>
        <position position="461"/>
    </location>
</feature>
<feature type="site" description="Interaction with DNA" evidence="1">
    <location>
        <position position="513"/>
    </location>
</feature>
<feature type="site" description="Interaction with DNA" evidence="1">
    <location>
        <position position="629"/>
    </location>
</feature>
<feature type="sequence conflict" description="In Ref. 4; CAA65022." evidence="6" ref="4">
    <original>P</original>
    <variation>L</variation>
    <location>
        <position position="166"/>
    </location>
</feature>
<feature type="sequence conflict" description="In Ref. 1 and 4." evidence="6" ref="1 4">
    <original>N</original>
    <variation>D</variation>
    <location>
        <position position="217"/>
    </location>
</feature>
<feature type="sequence conflict" description="In Ref. 1 and 4." evidence="6" ref="1 4">
    <original>V</original>
    <variation>I</variation>
    <location>
        <position position="460"/>
    </location>
</feature>
<feature type="sequence conflict" description="In Ref. 4; CAA65022." evidence="6" ref="4">
    <original>R</original>
    <variation>L</variation>
    <location>
        <position position="568"/>
    </location>
</feature>
<feature type="sequence conflict" description="In Ref. 1 and 4." evidence="6" ref="1 4">
    <original>T</original>
    <variation>A</variation>
    <location>
        <position position="644"/>
    </location>
</feature>
<feature type="helix" evidence="11">
    <location>
        <begin position="13"/>
        <end position="15"/>
    </location>
</feature>
<feature type="helix" evidence="11">
    <location>
        <begin position="21"/>
        <end position="27"/>
    </location>
</feature>
<feature type="helix" evidence="11">
    <location>
        <begin position="29"/>
        <end position="33"/>
    </location>
</feature>
<feature type="helix" evidence="11">
    <location>
        <begin position="38"/>
        <end position="57"/>
    </location>
</feature>
<feature type="strand" evidence="11">
    <location>
        <begin position="62"/>
        <end position="68"/>
    </location>
</feature>
<feature type="strand" evidence="11">
    <location>
        <begin position="74"/>
        <end position="78"/>
    </location>
</feature>
<feature type="strand" evidence="12">
    <location>
        <begin position="86"/>
        <end position="88"/>
    </location>
</feature>
<feature type="strand" evidence="11">
    <location>
        <begin position="91"/>
        <end position="93"/>
    </location>
</feature>
<feature type="helix" evidence="11">
    <location>
        <begin position="94"/>
        <end position="100"/>
    </location>
</feature>
<feature type="strand" evidence="11">
    <location>
        <begin position="104"/>
        <end position="106"/>
    </location>
</feature>
<feature type="strand" evidence="11">
    <location>
        <begin position="108"/>
        <end position="112"/>
    </location>
</feature>
<feature type="helix" evidence="11">
    <location>
        <begin position="123"/>
        <end position="129"/>
    </location>
</feature>
<feature type="strand" evidence="11">
    <location>
        <begin position="131"/>
        <end position="140"/>
    </location>
</feature>
<feature type="strand" evidence="11">
    <location>
        <begin position="143"/>
        <end position="150"/>
    </location>
</feature>
<feature type="turn" evidence="11">
    <location>
        <begin position="151"/>
        <end position="153"/>
    </location>
</feature>
<feature type="strand" evidence="12">
    <location>
        <begin position="154"/>
        <end position="157"/>
    </location>
</feature>
<feature type="strand" evidence="11">
    <location>
        <begin position="160"/>
        <end position="164"/>
    </location>
</feature>
<feature type="strand" evidence="11">
    <location>
        <begin position="171"/>
        <end position="178"/>
    </location>
</feature>
<feature type="turn" evidence="11">
    <location>
        <begin position="180"/>
        <end position="182"/>
    </location>
</feature>
<feature type="helix" evidence="11">
    <location>
        <begin position="190"/>
        <end position="202"/>
    </location>
</feature>
<feature type="strand" evidence="11">
    <location>
        <begin position="208"/>
        <end position="213"/>
    </location>
</feature>
<feature type="turn" evidence="11">
    <location>
        <begin position="214"/>
        <end position="217"/>
    </location>
</feature>
<feature type="strand" evidence="11">
    <location>
        <begin position="218"/>
        <end position="222"/>
    </location>
</feature>
<feature type="helix" evidence="11">
    <location>
        <begin position="227"/>
        <end position="235"/>
    </location>
</feature>
<feature type="turn" evidence="11">
    <location>
        <begin position="236"/>
        <end position="238"/>
    </location>
</feature>
<feature type="strand" evidence="11">
    <location>
        <begin position="241"/>
        <end position="243"/>
    </location>
</feature>
<feature type="strand" evidence="11">
    <location>
        <begin position="246"/>
        <end position="252"/>
    </location>
</feature>
<feature type="strand" evidence="11">
    <location>
        <begin position="255"/>
        <end position="267"/>
    </location>
</feature>
<feature type="strand" evidence="11">
    <location>
        <begin position="270"/>
        <end position="275"/>
    </location>
</feature>
<feature type="helix" evidence="11">
    <location>
        <begin position="285"/>
        <end position="304"/>
    </location>
</feature>
<feature type="strand" evidence="12">
    <location>
        <begin position="310"/>
        <end position="312"/>
    </location>
</feature>
<feature type="helix" evidence="11">
    <location>
        <begin position="317"/>
        <end position="321"/>
    </location>
</feature>
<feature type="strand" evidence="11">
    <location>
        <begin position="324"/>
        <end position="331"/>
    </location>
</feature>
<feature type="helix" evidence="11">
    <location>
        <begin position="334"/>
        <end position="336"/>
    </location>
</feature>
<feature type="turn" evidence="11">
    <location>
        <begin position="341"/>
        <end position="344"/>
    </location>
</feature>
<feature type="strand" evidence="12">
    <location>
        <begin position="345"/>
        <end position="347"/>
    </location>
</feature>
<feature type="helix" evidence="11">
    <location>
        <begin position="352"/>
        <end position="370"/>
    </location>
</feature>
<feature type="helix" evidence="11">
    <location>
        <begin position="372"/>
        <end position="399"/>
    </location>
</feature>
<feature type="turn" evidence="8">
    <location>
        <begin position="424"/>
        <end position="426"/>
    </location>
</feature>
<feature type="strand" evidence="7">
    <location>
        <begin position="428"/>
        <end position="433"/>
    </location>
</feature>
<feature type="helix" evidence="7">
    <location>
        <begin position="435"/>
        <end position="443"/>
    </location>
</feature>
<feature type="turn" evidence="7">
    <location>
        <begin position="447"/>
        <end position="449"/>
    </location>
</feature>
<feature type="strand" evidence="7">
    <location>
        <begin position="450"/>
        <end position="455"/>
    </location>
</feature>
<feature type="turn" evidence="8">
    <location>
        <begin position="462"/>
        <end position="464"/>
    </location>
</feature>
<feature type="helix" evidence="7">
    <location>
        <begin position="467"/>
        <end position="471"/>
    </location>
</feature>
<feature type="helix" evidence="7">
    <location>
        <begin position="474"/>
        <end position="483"/>
    </location>
</feature>
<feature type="helix" evidence="10">
    <location>
        <begin position="488"/>
        <end position="490"/>
    </location>
</feature>
<feature type="helix" evidence="9">
    <location>
        <begin position="493"/>
        <end position="495"/>
    </location>
</feature>
<feature type="strand" evidence="7">
    <location>
        <begin position="499"/>
        <end position="504"/>
    </location>
</feature>
<feature type="helix" evidence="7">
    <location>
        <begin position="509"/>
        <end position="524"/>
    </location>
</feature>
<feature type="helix" evidence="7">
    <location>
        <begin position="527"/>
        <end position="531"/>
    </location>
</feature>
<feature type="strand" evidence="7">
    <location>
        <begin position="535"/>
        <end position="538"/>
    </location>
</feature>
<feature type="strand" evidence="7">
    <location>
        <begin position="542"/>
        <end position="547"/>
    </location>
</feature>
<feature type="helix" evidence="7">
    <location>
        <begin position="550"/>
        <end position="552"/>
    </location>
</feature>
<feature type="strand" evidence="7">
    <location>
        <begin position="554"/>
        <end position="558"/>
    </location>
</feature>
<feature type="helix" evidence="7">
    <location>
        <begin position="561"/>
        <end position="570"/>
    </location>
</feature>
<feature type="strand" evidence="7">
    <location>
        <begin position="576"/>
        <end position="579"/>
    </location>
</feature>
<feature type="helix" evidence="7">
    <location>
        <begin position="583"/>
        <end position="585"/>
    </location>
</feature>
<feature type="helix" evidence="7">
    <location>
        <begin position="588"/>
        <end position="595"/>
    </location>
</feature>
<feature type="turn" evidence="7">
    <location>
        <begin position="598"/>
        <end position="600"/>
    </location>
</feature>
<feature type="strand" evidence="7">
    <location>
        <begin position="603"/>
        <end position="607"/>
    </location>
</feature>
<feature type="helix" evidence="7">
    <location>
        <begin position="612"/>
        <end position="622"/>
    </location>
</feature>
<feature type="helix" evidence="7">
    <location>
        <begin position="627"/>
        <end position="636"/>
    </location>
</feature>
<accession>Q59961</accession>
<accession>P77956</accession>
<evidence type="ECO:0000255" key="1">
    <source>
        <dbReference type="HAMAP-Rule" id="MF_00939"/>
    </source>
</evidence>
<evidence type="ECO:0000256" key="2">
    <source>
        <dbReference type="SAM" id="MobiDB-lite"/>
    </source>
</evidence>
<evidence type="ECO:0000269" key="3">
    <source>
    </source>
</evidence>
<evidence type="ECO:0000269" key="4">
    <source>
    </source>
</evidence>
<evidence type="ECO:0000269" key="5">
    <source>
    </source>
</evidence>
<evidence type="ECO:0000305" key="6"/>
<evidence type="ECO:0007829" key="7">
    <source>
        <dbReference type="PDB" id="3K9F"/>
    </source>
</evidence>
<evidence type="ECO:0007829" key="8">
    <source>
        <dbReference type="PDB" id="3RAE"/>
    </source>
</evidence>
<evidence type="ECO:0007829" key="9">
    <source>
        <dbReference type="PDB" id="4KOE"/>
    </source>
</evidence>
<evidence type="ECO:0007829" key="10">
    <source>
        <dbReference type="PDB" id="4Z4Q"/>
    </source>
</evidence>
<evidence type="ECO:0007829" key="11">
    <source>
        <dbReference type="PDB" id="5J5P"/>
    </source>
</evidence>
<evidence type="ECO:0007829" key="12">
    <source>
        <dbReference type="PDB" id="5J5Q"/>
    </source>
</evidence>
<comment type="function">
    <text evidence="1 3 5">Topoisomerase IV is essential for chromosome segregation. It relaxes supercoiled DNA. Performs the decatenation events required during the replication of a circular DNA molecule.</text>
</comment>
<comment type="catalytic activity">
    <reaction evidence="1 3 5">
        <text>ATP-dependent breakage, passage and rejoining of double-stranded DNA.</text>
        <dbReference type="EC" id="5.6.2.2"/>
    </reaction>
</comment>
<comment type="cofactor">
    <cofactor evidence="1 5">
        <name>Mg(2+)</name>
        <dbReference type="ChEBI" id="CHEBI:18420"/>
    </cofactor>
    <cofactor evidence="1 5">
        <name>Mn(2+)</name>
        <dbReference type="ChEBI" id="CHEBI:29035"/>
    </cofactor>
    <cofactor evidence="1 5">
        <name>Ca(2+)</name>
        <dbReference type="ChEBI" id="CHEBI:29108"/>
    </cofactor>
    <text evidence="1 5">Binds two Mg(2+) per subunit. The magnesium ions form salt bridges with both the protein and the DNA. Can also accept other divalent metal cations, such as Mn(2+) or Ca(2+).</text>
</comment>
<comment type="activity regulation">
    <text evidence="5">Inhibited by quinolones, such as levofloxacin.</text>
</comment>
<comment type="subunit">
    <text evidence="1 3 4 5">Heterotetramer composed of ParC and ParE.</text>
</comment>
<comment type="similarity">
    <text evidence="1">Belongs to the type II topoisomerase family. ParE type 2 subfamily.</text>
</comment>
<protein>
    <recommendedName>
        <fullName evidence="1">DNA topoisomerase 4 subunit B</fullName>
        <ecNumber evidence="1 3 5">5.6.2.2</ecNumber>
    </recommendedName>
    <alternativeName>
        <fullName evidence="1">Topoisomerase IV subunit B</fullName>
    </alternativeName>
</protein>
<gene>
    <name evidence="1" type="primary">parE</name>
    <name type="ordered locus">SP_0852</name>
</gene>
<reference key="1">
    <citation type="journal article" date="1996" name="J. Bacteriol.">
        <title>Cloning and characterization of the parC and parE genes of Streptococcus pneumoniae encoding DNA topoisomerase IV: role in fluoroquinolone resistance.</title>
        <authorList>
            <person name="Pan X."/>
            <person name="Fisher M."/>
        </authorList>
    </citation>
    <scope>NUCLEOTIDE SEQUENCE [GENOMIC DNA]</scope>
    <source>
        <strain>7785</strain>
    </source>
</reference>
<reference key="2">
    <citation type="submission" date="2000-01" db="EMBL/GenBank/DDBJ databases">
        <authorList>
            <person name="Pan X."/>
        </authorList>
    </citation>
    <scope>SEQUENCE REVISION TO 329; 347 AND 351</scope>
</reference>
<reference key="3">
    <citation type="journal article" date="2001" name="Science">
        <title>Complete genome sequence of a virulent isolate of Streptococcus pneumoniae.</title>
        <authorList>
            <person name="Tettelin H."/>
            <person name="Nelson K.E."/>
            <person name="Paulsen I.T."/>
            <person name="Eisen J.A."/>
            <person name="Read T.D."/>
            <person name="Peterson S.N."/>
            <person name="Heidelberg J.F."/>
            <person name="DeBoy R.T."/>
            <person name="Haft D.H."/>
            <person name="Dodson R.J."/>
            <person name="Durkin A.S."/>
            <person name="Gwinn M.L."/>
            <person name="Kolonay J.F."/>
            <person name="Nelson W.C."/>
            <person name="Peterson J.D."/>
            <person name="Umayam L.A."/>
            <person name="White O."/>
            <person name="Salzberg S.L."/>
            <person name="Lewis M.R."/>
            <person name="Radune D."/>
            <person name="Holtzapple E.K."/>
            <person name="Khouri H.M."/>
            <person name="Wolf A.M."/>
            <person name="Utterback T.R."/>
            <person name="Hansen C.L."/>
            <person name="McDonald L.A."/>
            <person name="Feldblyum T.V."/>
            <person name="Angiuoli S.V."/>
            <person name="Dickinson T."/>
            <person name="Hickey E.K."/>
            <person name="Holt I.E."/>
            <person name="Loftus B.J."/>
            <person name="Yang F."/>
            <person name="Smith H.O."/>
            <person name="Venter J.C."/>
            <person name="Dougherty B.A."/>
            <person name="Morrison D.A."/>
            <person name="Hollingshead S.K."/>
            <person name="Fraser C.M."/>
        </authorList>
    </citation>
    <scope>NUCLEOTIDE SEQUENCE [LARGE SCALE GENOMIC DNA]</scope>
    <source>
        <strain>ATCC BAA-334 / TIGR4</strain>
    </source>
</reference>
<reference key="4">
    <citation type="journal article" date="1996" name="Antimicrob. Agents Chemother.">
        <title>ParC subunit of DNA topoisomerase IV of Streptococcus pneumoniae is a primary target of fluoroquinolones and cooperates with DNA gyrase A subunit in forming resistance phenotype.</title>
        <authorList>
            <person name="Munoz R."/>
            <person name="de la Campa A.G."/>
        </authorList>
    </citation>
    <scope>NUCLEOTIDE SEQUENCE [GENOMIC DNA] OF 93-647</scope>
    <source>
        <strain>D39 / NCTC 7466 / Serotype 2</strain>
    </source>
</reference>
<reference key="5">
    <citation type="journal article" date="2007" name="PLoS ONE">
        <title>Breakage-reunion domain of Streptococcus pneumoniae topoisomerase IV: crystal structure of a gram-positive quinolone target.</title>
        <authorList>
            <person name="Laponogov I."/>
            <person name="Veselkov D.A."/>
            <person name="Sohi M.K."/>
            <person name="Pan X.S."/>
            <person name="Achari A."/>
            <person name="Yang C."/>
            <person name="Ferrara J.D."/>
            <person name="Fisher L.M."/>
            <person name="Sanderson M.R."/>
        </authorList>
    </citation>
    <scope>FUNCTION</scope>
    <scope>CATALYTIC ACTIVITY</scope>
    <scope>SUBUNIT</scope>
</reference>
<reference key="6">
    <citation type="journal article" date="2009" name="Nat. Struct. Mol. Biol.">
        <title>Structural insight into the quinolone-DNA cleavage complex of type IIA topoisomerases.</title>
        <authorList>
            <person name="Laponogov I."/>
            <person name="Sohi M.K."/>
            <person name="Veselkov D.A."/>
            <person name="Pan X.S."/>
            <person name="Sawhney R."/>
            <person name="Thompson A.W."/>
            <person name="McAuley K.E."/>
            <person name="Fisher L.M."/>
            <person name="Sanderson M.R."/>
        </authorList>
    </citation>
    <scope>X-RAY CRYSTALLOGRAPHY (4.0 ANGSTROMS) OF 404-647 IN COMPLEX WITH PARC AND DNA</scope>
    <scope>SUBUNIT</scope>
</reference>
<reference key="7">
    <citation type="journal article" date="2010" name="PLoS ONE">
        <title>Structural basis of gate-DNA breakage and resealing by type II topoisomerases.</title>
        <authorList>
            <person name="Laponogov I."/>
            <person name="Pan X.S."/>
            <person name="Veselkov D.A."/>
            <person name="McAuley K.E."/>
            <person name="Fisher L.M."/>
            <person name="Sanderson M.R."/>
        </authorList>
    </citation>
    <scope>X-RAY CRYSTALLOGRAPHY (2.9 ANGSTROMS) OF 404-647 IN COMPLEX WITH PARC; MAGNESIUM; LEVOFLOXACIN AND DNA</scope>
    <scope>CATALYTIC ACTIVITY</scope>
    <scope>FUNCTION</scope>
    <scope>ACTIVITY REGULATION</scope>
    <scope>COFACTOR</scope>
    <scope>SUBUNIT</scope>
</reference>
<proteinExistence type="evidence at protein level"/>
<keyword id="KW-0002">3D-structure</keyword>
<keyword id="KW-0067">ATP-binding</keyword>
<keyword id="KW-0238">DNA-binding</keyword>
<keyword id="KW-0413">Isomerase</keyword>
<keyword id="KW-0460">Magnesium</keyword>
<keyword id="KW-0479">Metal-binding</keyword>
<keyword id="KW-0547">Nucleotide-binding</keyword>
<keyword id="KW-1185">Reference proteome</keyword>
<keyword id="KW-0799">Topoisomerase</keyword>
<sequence>MSKKEININNYNDDAIQVLEGLDAVRKRPGMYIGSTDGAGLHHLVWEIVDNAVDEALSGFGDRIDVTINKDGSLTVQDHGRGMPTGMHAMGIPTVEVIFTILHAGGKFGQGGYKTSGGLHGVGSSVVNALSSWLEVEITRDGAVYKQRFENGGKPVTTLKKIGTAPKSKTGTKVTFMPDATIFSTTDFKYNTISERLNESAFLLKNVTLSLTDKRTNEAIEFHYENGVQDFVSYLNEDKEILTPVLYFEGEDNGFQVEVALQYNDGFSDNILSFVNNVRTKDGGTHETGLKSAITKVMNDYARKTGLLKEKDKNLEGSDYREGLAAVLSILVPEEHLQFEGQTKDKLGSPLARPVVDGIVADKLTFFLMENGELASNLIRKAIKARDAREAARKARDESRNGKKNKKDKGLLSGKLTPAQSKNPAKNELYLVEGDSAGGSAKQGRDRKFQAILPLRGKVVNTAKAKMADILKNEEINTMIYTIGAGVGADFSIEDANYDKIIIMTDADTDGAHIQTLLLTFFYRYMRPLVEAGHVYIALPPLYKMSKGKGKKEEVAYAWTDGELEELRKQFGKGATLQRYKGLGEMNADQLWETTMNPETRTLIRVTIEDLARAERRVNVLMGDKVEPRRKWIEDNVKFTLEETTVF</sequence>
<organism>
    <name type="scientific">Streptococcus pneumoniae serotype 4 (strain ATCC BAA-334 / TIGR4)</name>
    <dbReference type="NCBI Taxonomy" id="170187"/>
    <lineage>
        <taxon>Bacteria</taxon>
        <taxon>Bacillati</taxon>
        <taxon>Bacillota</taxon>
        <taxon>Bacilli</taxon>
        <taxon>Lactobacillales</taxon>
        <taxon>Streptococcaceae</taxon>
        <taxon>Streptococcus</taxon>
    </lineage>
</organism>
<name>PARE_STRPN</name>
<dbReference type="EC" id="5.6.2.2" evidence="1 3 5"/>
<dbReference type="EMBL" id="Z67739">
    <property type="protein sequence ID" value="CAA91550.2"/>
    <property type="molecule type" value="Genomic_DNA"/>
</dbReference>
<dbReference type="EMBL" id="AE005672">
    <property type="protein sequence ID" value="AAK74981.1"/>
    <property type="molecule type" value="Genomic_DNA"/>
</dbReference>
<dbReference type="EMBL" id="X95717">
    <property type="protein sequence ID" value="CAA65022.1"/>
    <property type="molecule type" value="Genomic_DNA"/>
</dbReference>
<dbReference type="PIR" id="D95098">
    <property type="entry name" value="D95098"/>
</dbReference>
<dbReference type="RefSeq" id="WP_000037283.1">
    <property type="nucleotide sequence ID" value="NC_003028.3"/>
</dbReference>
<dbReference type="PDB" id="3FOE">
    <property type="method" value="X-ray"/>
    <property type="resolution" value="4.00 A"/>
    <property type="chains" value="C/D=404-647"/>
</dbReference>
<dbReference type="PDB" id="3FOF">
    <property type="method" value="X-ray"/>
    <property type="resolution" value="4.00 A"/>
    <property type="chains" value="C/D=404-647"/>
</dbReference>
<dbReference type="PDB" id="3K9F">
    <property type="method" value="X-ray"/>
    <property type="resolution" value="2.90 A"/>
    <property type="chains" value="C/D=404-647"/>
</dbReference>
<dbReference type="PDB" id="3KSA">
    <property type="method" value="X-ray"/>
    <property type="resolution" value="3.30 A"/>
    <property type="chains" value="C/D=404-647"/>
</dbReference>
<dbReference type="PDB" id="3KSB">
    <property type="method" value="X-ray"/>
    <property type="resolution" value="3.50 A"/>
    <property type="chains" value="C/D=404-647"/>
</dbReference>
<dbReference type="PDB" id="3LTN">
    <property type="method" value="X-ray"/>
    <property type="resolution" value="3.10 A"/>
    <property type="chains" value="C/D=404-647"/>
</dbReference>
<dbReference type="PDB" id="3RAD">
    <property type="method" value="X-ray"/>
    <property type="resolution" value="3.35 A"/>
    <property type="chains" value="C/D=404-647"/>
</dbReference>
<dbReference type="PDB" id="3RAE">
    <property type="method" value="X-ray"/>
    <property type="resolution" value="2.90 A"/>
    <property type="chains" value="C/D=404-647"/>
</dbReference>
<dbReference type="PDB" id="3RAF">
    <property type="method" value="X-ray"/>
    <property type="resolution" value="3.24 A"/>
    <property type="chains" value="C/D=404-647"/>
</dbReference>
<dbReference type="PDB" id="4I3H">
    <property type="method" value="X-ray"/>
    <property type="resolution" value="3.70 A"/>
    <property type="chains" value="A/B=1-647"/>
</dbReference>
<dbReference type="PDB" id="4JUO">
    <property type="method" value="X-ray"/>
    <property type="resolution" value="6.53 A"/>
    <property type="chains" value="C=1-647"/>
</dbReference>
<dbReference type="PDB" id="4KOE">
    <property type="method" value="X-ray"/>
    <property type="resolution" value="3.02 A"/>
    <property type="chains" value="C/D=404-647"/>
</dbReference>
<dbReference type="PDB" id="4KPE">
    <property type="method" value="X-ray"/>
    <property type="resolution" value="3.43 A"/>
    <property type="chains" value="C/D=404-647"/>
</dbReference>
<dbReference type="PDB" id="4KPF">
    <property type="method" value="X-ray"/>
    <property type="resolution" value="3.24 A"/>
    <property type="chains" value="C/D=404-647"/>
</dbReference>
<dbReference type="PDB" id="4Z3O">
    <property type="method" value="X-ray"/>
    <property type="resolution" value="3.44 A"/>
    <property type="chains" value="A/B=404-643"/>
</dbReference>
<dbReference type="PDB" id="4Z4Q">
    <property type="method" value="X-ray"/>
    <property type="resolution" value="3.04 A"/>
    <property type="chains" value="A/B=404-643"/>
</dbReference>
<dbReference type="PDB" id="4Z53">
    <property type="method" value="X-ray"/>
    <property type="resolution" value="3.26 A"/>
    <property type="chains" value="A/B=404-643"/>
</dbReference>
<dbReference type="PDB" id="5J5P">
    <property type="method" value="X-ray"/>
    <property type="resolution" value="1.97 A"/>
    <property type="chains" value="A/B=1-402"/>
</dbReference>
<dbReference type="PDB" id="5J5Q">
    <property type="method" value="X-ray"/>
    <property type="resolution" value="2.83 A"/>
    <property type="chains" value="A/B/C/D=1-402"/>
</dbReference>
<dbReference type="PDB" id="8QMB">
    <property type="method" value="X-ray"/>
    <property type="resolution" value="2.00 A"/>
    <property type="chains" value="A/B=404-647"/>
</dbReference>
<dbReference type="PDBsum" id="3FOE"/>
<dbReference type="PDBsum" id="3FOF"/>
<dbReference type="PDBsum" id="3K9F"/>
<dbReference type="PDBsum" id="3KSA"/>
<dbReference type="PDBsum" id="3KSB"/>
<dbReference type="PDBsum" id="3LTN"/>
<dbReference type="PDBsum" id="3RAD"/>
<dbReference type="PDBsum" id="3RAE"/>
<dbReference type="PDBsum" id="3RAF"/>
<dbReference type="PDBsum" id="4I3H"/>
<dbReference type="PDBsum" id="4JUO"/>
<dbReference type="PDBsum" id="4KOE"/>
<dbReference type="PDBsum" id="4KPE"/>
<dbReference type="PDBsum" id="4KPF"/>
<dbReference type="PDBsum" id="4Z3O"/>
<dbReference type="PDBsum" id="4Z4Q"/>
<dbReference type="PDBsum" id="4Z53"/>
<dbReference type="PDBsum" id="5J5P"/>
<dbReference type="PDBsum" id="5J5Q"/>
<dbReference type="PDBsum" id="8QMB"/>
<dbReference type="SMR" id="Q59961"/>
<dbReference type="DIP" id="DIP-48520N"/>
<dbReference type="IntAct" id="Q59961">
    <property type="interactions" value="1"/>
</dbReference>
<dbReference type="ChEMBL" id="CHEMBL2363033"/>
<dbReference type="DrugBank" id="DB01044">
    <property type="generic name" value="Gatifloxacin"/>
</dbReference>
<dbReference type="DrugCentral" id="Q59961"/>
<dbReference type="PaxDb" id="170187-SP_0852"/>
<dbReference type="EnsemblBacteria" id="AAK74981">
    <property type="protein sequence ID" value="AAK74981"/>
    <property type="gene ID" value="SP_0852"/>
</dbReference>
<dbReference type="KEGG" id="spn:SP_0852"/>
<dbReference type="eggNOG" id="COG0187">
    <property type="taxonomic scope" value="Bacteria"/>
</dbReference>
<dbReference type="PhylomeDB" id="Q59961"/>
<dbReference type="BioCyc" id="SPNE170187:G1FZB-872-MONOMER"/>
<dbReference type="EvolutionaryTrace" id="Q59961"/>
<dbReference type="PRO" id="PR:Q59961"/>
<dbReference type="Proteomes" id="UP000000585">
    <property type="component" value="Chromosome"/>
</dbReference>
<dbReference type="GO" id="GO:0005694">
    <property type="term" value="C:chromosome"/>
    <property type="evidence" value="ECO:0007669"/>
    <property type="project" value="InterPro"/>
</dbReference>
<dbReference type="GO" id="GO:0005524">
    <property type="term" value="F:ATP binding"/>
    <property type="evidence" value="ECO:0007669"/>
    <property type="project" value="UniProtKB-UniRule"/>
</dbReference>
<dbReference type="GO" id="GO:0003677">
    <property type="term" value="F:DNA binding"/>
    <property type="evidence" value="ECO:0007669"/>
    <property type="project" value="UniProtKB-UniRule"/>
</dbReference>
<dbReference type="GO" id="GO:0034335">
    <property type="term" value="F:DNA negative supercoiling activity"/>
    <property type="evidence" value="ECO:0007669"/>
    <property type="project" value="UniProtKB-ARBA"/>
</dbReference>
<dbReference type="GO" id="GO:0046872">
    <property type="term" value="F:metal ion binding"/>
    <property type="evidence" value="ECO:0007669"/>
    <property type="project" value="UniProtKB-KW"/>
</dbReference>
<dbReference type="GO" id="GO:0007059">
    <property type="term" value="P:chromosome segregation"/>
    <property type="evidence" value="ECO:0007669"/>
    <property type="project" value="UniProtKB-UniRule"/>
</dbReference>
<dbReference type="GO" id="GO:0006265">
    <property type="term" value="P:DNA topological change"/>
    <property type="evidence" value="ECO:0007669"/>
    <property type="project" value="UniProtKB-UniRule"/>
</dbReference>
<dbReference type="CDD" id="cd16928">
    <property type="entry name" value="HATPase_GyrB-like"/>
    <property type="match status" value="1"/>
</dbReference>
<dbReference type="CDD" id="cd00822">
    <property type="entry name" value="TopoII_Trans_DNA_gyrase"/>
    <property type="match status" value="1"/>
</dbReference>
<dbReference type="FunFam" id="3.30.230.10:FF:000005">
    <property type="entry name" value="DNA gyrase subunit B"/>
    <property type="match status" value="1"/>
</dbReference>
<dbReference type="FunFam" id="3.30.565.10:FF:000002">
    <property type="entry name" value="DNA gyrase subunit B"/>
    <property type="match status" value="1"/>
</dbReference>
<dbReference type="FunFam" id="3.40.50.670:FF:000002">
    <property type="entry name" value="DNA gyrase subunit B"/>
    <property type="match status" value="1"/>
</dbReference>
<dbReference type="Gene3D" id="3.30.230.10">
    <property type="match status" value="1"/>
</dbReference>
<dbReference type="Gene3D" id="3.40.50.670">
    <property type="match status" value="1"/>
</dbReference>
<dbReference type="Gene3D" id="3.30.565.10">
    <property type="entry name" value="Histidine kinase-like ATPase, C-terminal domain"/>
    <property type="match status" value="1"/>
</dbReference>
<dbReference type="HAMAP" id="MF_00939">
    <property type="entry name" value="ParE_type2"/>
    <property type="match status" value="1"/>
</dbReference>
<dbReference type="InterPro" id="IPR002288">
    <property type="entry name" value="DNA_gyrase_B_C"/>
</dbReference>
<dbReference type="InterPro" id="IPR036890">
    <property type="entry name" value="HATPase_C_sf"/>
</dbReference>
<dbReference type="InterPro" id="IPR005740">
    <property type="entry name" value="ParE_type2"/>
</dbReference>
<dbReference type="InterPro" id="IPR020568">
    <property type="entry name" value="Ribosomal_Su5_D2-typ_SF"/>
</dbReference>
<dbReference type="InterPro" id="IPR014721">
    <property type="entry name" value="Ribsml_uS5_D2-typ_fold_subgr"/>
</dbReference>
<dbReference type="InterPro" id="IPR001241">
    <property type="entry name" value="Topo_IIA"/>
</dbReference>
<dbReference type="InterPro" id="IPR013760">
    <property type="entry name" value="Topo_IIA-like_dom_sf"/>
</dbReference>
<dbReference type="InterPro" id="IPR000565">
    <property type="entry name" value="Topo_IIA_B"/>
</dbReference>
<dbReference type="InterPro" id="IPR013759">
    <property type="entry name" value="Topo_IIA_B_C"/>
</dbReference>
<dbReference type="InterPro" id="IPR013506">
    <property type="entry name" value="Topo_IIA_bsu_dom2"/>
</dbReference>
<dbReference type="InterPro" id="IPR018522">
    <property type="entry name" value="TopoIIA_CS"/>
</dbReference>
<dbReference type="InterPro" id="IPR006171">
    <property type="entry name" value="TOPRIM_dom"/>
</dbReference>
<dbReference type="NCBIfam" id="TIGR01058">
    <property type="entry name" value="parE_Gpos"/>
    <property type="match status" value="1"/>
</dbReference>
<dbReference type="NCBIfam" id="NF004189">
    <property type="entry name" value="PRK05644.1"/>
    <property type="match status" value="1"/>
</dbReference>
<dbReference type="PANTHER" id="PTHR45866">
    <property type="entry name" value="DNA GYRASE/TOPOISOMERASE SUBUNIT B"/>
    <property type="match status" value="1"/>
</dbReference>
<dbReference type="PANTHER" id="PTHR45866:SF12">
    <property type="entry name" value="DNA TOPOISOMERASE 4 SUBUNIT B"/>
    <property type="match status" value="1"/>
</dbReference>
<dbReference type="Pfam" id="PF00204">
    <property type="entry name" value="DNA_gyraseB"/>
    <property type="match status" value="1"/>
</dbReference>
<dbReference type="Pfam" id="PF00986">
    <property type="entry name" value="DNA_gyraseB_C"/>
    <property type="match status" value="1"/>
</dbReference>
<dbReference type="Pfam" id="PF02518">
    <property type="entry name" value="HATPase_c"/>
    <property type="match status" value="1"/>
</dbReference>
<dbReference type="Pfam" id="PF01751">
    <property type="entry name" value="Toprim"/>
    <property type="match status" value="1"/>
</dbReference>
<dbReference type="PRINTS" id="PR01159">
    <property type="entry name" value="DNAGYRASEB"/>
</dbReference>
<dbReference type="PRINTS" id="PR00418">
    <property type="entry name" value="TPI2FAMILY"/>
</dbReference>
<dbReference type="SMART" id="SM00387">
    <property type="entry name" value="HATPase_c"/>
    <property type="match status" value="1"/>
</dbReference>
<dbReference type="SMART" id="SM00433">
    <property type="entry name" value="TOP2c"/>
    <property type="match status" value="1"/>
</dbReference>
<dbReference type="SUPFAM" id="SSF55874">
    <property type="entry name" value="ATPase domain of HSP90 chaperone/DNA topoisomerase II/histidine kinase"/>
    <property type="match status" value="1"/>
</dbReference>
<dbReference type="SUPFAM" id="SSF54211">
    <property type="entry name" value="Ribosomal protein S5 domain 2-like"/>
    <property type="match status" value="1"/>
</dbReference>
<dbReference type="SUPFAM" id="SSF56719">
    <property type="entry name" value="Type II DNA topoisomerase"/>
    <property type="match status" value="1"/>
</dbReference>
<dbReference type="PROSITE" id="PS00177">
    <property type="entry name" value="TOPOISOMERASE_II"/>
    <property type="match status" value="1"/>
</dbReference>
<dbReference type="PROSITE" id="PS50880">
    <property type="entry name" value="TOPRIM"/>
    <property type="match status" value="1"/>
</dbReference>